<sequence>MKTKLNELLEFPCSFTYKVMGIAEPQLVDQVVEVVQRHAPGEYTPQVKPSSKGNYHSVSITITATHIDQVETLYEELGNLELVKMVL</sequence>
<gene>
    <name type="ordered locus">YPO2600</name>
    <name type="ordered locus">y1174</name>
    <name type="ordered locus">YP_1113</name>
</gene>
<name>Y2600_YERPE</name>
<comment type="similarity">
    <text evidence="1">Belongs to the UPF0250 family.</text>
</comment>
<keyword id="KW-1185">Reference proteome</keyword>
<reference key="1">
    <citation type="journal article" date="2001" name="Nature">
        <title>Genome sequence of Yersinia pestis, the causative agent of plague.</title>
        <authorList>
            <person name="Parkhill J."/>
            <person name="Wren B.W."/>
            <person name="Thomson N.R."/>
            <person name="Titball R.W."/>
            <person name="Holden M.T.G."/>
            <person name="Prentice M.B."/>
            <person name="Sebaihia M."/>
            <person name="James K.D."/>
            <person name="Churcher C.M."/>
            <person name="Mungall K.L."/>
            <person name="Baker S."/>
            <person name="Basham D."/>
            <person name="Bentley S.D."/>
            <person name="Brooks K."/>
            <person name="Cerdeno-Tarraga A.-M."/>
            <person name="Chillingworth T."/>
            <person name="Cronin A."/>
            <person name="Davies R.M."/>
            <person name="Davis P."/>
            <person name="Dougan G."/>
            <person name="Feltwell T."/>
            <person name="Hamlin N."/>
            <person name="Holroyd S."/>
            <person name="Jagels K."/>
            <person name="Karlyshev A.V."/>
            <person name="Leather S."/>
            <person name="Moule S."/>
            <person name="Oyston P.C.F."/>
            <person name="Quail M.A."/>
            <person name="Rutherford K.M."/>
            <person name="Simmonds M."/>
            <person name="Skelton J."/>
            <person name="Stevens K."/>
            <person name="Whitehead S."/>
            <person name="Barrell B.G."/>
        </authorList>
    </citation>
    <scope>NUCLEOTIDE SEQUENCE [LARGE SCALE GENOMIC DNA]</scope>
    <source>
        <strain>CO-92 / Biovar Orientalis</strain>
    </source>
</reference>
<reference key="2">
    <citation type="journal article" date="2002" name="J. Bacteriol.">
        <title>Genome sequence of Yersinia pestis KIM.</title>
        <authorList>
            <person name="Deng W."/>
            <person name="Burland V."/>
            <person name="Plunkett G. III"/>
            <person name="Boutin A."/>
            <person name="Mayhew G.F."/>
            <person name="Liss P."/>
            <person name="Perna N.T."/>
            <person name="Rose D.J."/>
            <person name="Mau B."/>
            <person name="Zhou S."/>
            <person name="Schwartz D.C."/>
            <person name="Fetherston J.D."/>
            <person name="Lindler L.E."/>
            <person name="Brubaker R.R."/>
            <person name="Plano G.V."/>
            <person name="Straley S.C."/>
            <person name="McDonough K.A."/>
            <person name="Nilles M.L."/>
            <person name="Matson J.S."/>
            <person name="Blattner F.R."/>
            <person name="Perry R.D."/>
        </authorList>
    </citation>
    <scope>NUCLEOTIDE SEQUENCE [LARGE SCALE GENOMIC DNA]</scope>
    <source>
        <strain>KIM10+ / Biovar Mediaevalis</strain>
    </source>
</reference>
<reference key="3">
    <citation type="journal article" date="2004" name="DNA Res.">
        <title>Complete genome sequence of Yersinia pestis strain 91001, an isolate avirulent to humans.</title>
        <authorList>
            <person name="Song Y."/>
            <person name="Tong Z."/>
            <person name="Wang J."/>
            <person name="Wang L."/>
            <person name="Guo Z."/>
            <person name="Han Y."/>
            <person name="Zhang J."/>
            <person name="Pei D."/>
            <person name="Zhou D."/>
            <person name="Qin H."/>
            <person name="Pang X."/>
            <person name="Han Y."/>
            <person name="Zhai J."/>
            <person name="Li M."/>
            <person name="Cui B."/>
            <person name="Qi Z."/>
            <person name="Jin L."/>
            <person name="Dai R."/>
            <person name="Chen F."/>
            <person name="Li S."/>
            <person name="Ye C."/>
            <person name="Du Z."/>
            <person name="Lin W."/>
            <person name="Wang J."/>
            <person name="Yu J."/>
            <person name="Yang H."/>
            <person name="Wang J."/>
            <person name="Huang P."/>
            <person name="Yang R."/>
        </authorList>
    </citation>
    <scope>NUCLEOTIDE SEQUENCE [LARGE SCALE GENOMIC DNA]</scope>
    <source>
        <strain>91001 / Biovar Mediaevalis</strain>
    </source>
</reference>
<organism>
    <name type="scientific">Yersinia pestis</name>
    <dbReference type="NCBI Taxonomy" id="632"/>
    <lineage>
        <taxon>Bacteria</taxon>
        <taxon>Pseudomonadati</taxon>
        <taxon>Pseudomonadota</taxon>
        <taxon>Gammaproteobacteria</taxon>
        <taxon>Enterobacterales</taxon>
        <taxon>Yersiniaceae</taxon>
        <taxon>Yersinia</taxon>
    </lineage>
</organism>
<accession>Q8ZDG8</accession>
<accession>Q0WDT2</accession>
<evidence type="ECO:0000255" key="1">
    <source>
        <dbReference type="HAMAP-Rule" id="MF_00659"/>
    </source>
</evidence>
<proteinExistence type="inferred from homology"/>
<protein>
    <recommendedName>
        <fullName evidence="1">UPF0250 protein YPO2600/y1174/YP_1113</fullName>
    </recommendedName>
</protein>
<feature type="chain" id="PRO_0000209322" description="UPF0250 protein YPO2600/y1174/YP_1113">
    <location>
        <begin position="1"/>
        <end position="87"/>
    </location>
</feature>
<dbReference type="EMBL" id="AL590842">
    <property type="protein sequence ID" value="CAL21223.1"/>
    <property type="molecule type" value="Genomic_DNA"/>
</dbReference>
<dbReference type="EMBL" id="AE009952">
    <property type="protein sequence ID" value="AAM84751.1"/>
    <property type="molecule type" value="Genomic_DNA"/>
</dbReference>
<dbReference type="EMBL" id="AE017042">
    <property type="protein sequence ID" value="AAS61359.1"/>
    <property type="molecule type" value="Genomic_DNA"/>
</dbReference>
<dbReference type="PIR" id="AD0317">
    <property type="entry name" value="AD0317"/>
</dbReference>
<dbReference type="RefSeq" id="YP_002347556.1">
    <property type="nucleotide sequence ID" value="NC_003143.1"/>
</dbReference>
<dbReference type="SMR" id="Q8ZDG8"/>
<dbReference type="STRING" id="214092.YPO2600"/>
<dbReference type="PaxDb" id="214092-YPO2600"/>
<dbReference type="DNASU" id="1146121"/>
<dbReference type="EnsemblBacteria" id="AAS61359">
    <property type="protein sequence ID" value="AAS61359"/>
    <property type="gene ID" value="YP_1113"/>
</dbReference>
<dbReference type="KEGG" id="ype:YPO2600"/>
<dbReference type="KEGG" id="ypk:y1174"/>
<dbReference type="KEGG" id="ypm:YP_1113"/>
<dbReference type="PATRIC" id="fig|214092.21.peg.3029"/>
<dbReference type="eggNOG" id="COG2921">
    <property type="taxonomic scope" value="Bacteria"/>
</dbReference>
<dbReference type="HOGENOM" id="CLU_161438_2_1_6"/>
<dbReference type="OMA" id="MNTKFDE"/>
<dbReference type="OrthoDB" id="9793424at2"/>
<dbReference type="Proteomes" id="UP000000815">
    <property type="component" value="Chromosome"/>
</dbReference>
<dbReference type="Proteomes" id="UP000001019">
    <property type="component" value="Chromosome"/>
</dbReference>
<dbReference type="Proteomes" id="UP000002490">
    <property type="component" value="Chromosome"/>
</dbReference>
<dbReference type="GO" id="GO:0005829">
    <property type="term" value="C:cytosol"/>
    <property type="evidence" value="ECO:0000318"/>
    <property type="project" value="GO_Central"/>
</dbReference>
<dbReference type="FunFam" id="3.30.70.260:FF:000002">
    <property type="entry name" value="UPF0250 protein YbeD"/>
    <property type="match status" value="1"/>
</dbReference>
<dbReference type="Gene3D" id="3.30.70.260">
    <property type="match status" value="1"/>
</dbReference>
<dbReference type="HAMAP" id="MF_00659">
    <property type="entry name" value="UPF0250"/>
    <property type="match status" value="1"/>
</dbReference>
<dbReference type="InterPro" id="IPR007454">
    <property type="entry name" value="UPF0250_YbeD-like"/>
</dbReference>
<dbReference type="InterPro" id="IPR027471">
    <property type="entry name" value="YbeD-like_sf"/>
</dbReference>
<dbReference type="NCBIfam" id="NF003447">
    <property type="entry name" value="PRK04998.1"/>
    <property type="match status" value="1"/>
</dbReference>
<dbReference type="PANTHER" id="PTHR38036">
    <property type="entry name" value="UPF0250 PROTEIN YBED"/>
    <property type="match status" value="1"/>
</dbReference>
<dbReference type="PANTHER" id="PTHR38036:SF1">
    <property type="entry name" value="UPF0250 PROTEIN YBED"/>
    <property type="match status" value="1"/>
</dbReference>
<dbReference type="Pfam" id="PF04359">
    <property type="entry name" value="DUF493"/>
    <property type="match status" value="1"/>
</dbReference>
<dbReference type="SUPFAM" id="SSF117991">
    <property type="entry name" value="YbeD/HP0495-like"/>
    <property type="match status" value="1"/>
</dbReference>